<proteinExistence type="evidence at protein level"/>
<organism evidence="8">
    <name type="scientific">Caenorhabditis elegans</name>
    <dbReference type="NCBI Taxonomy" id="6239"/>
    <lineage>
        <taxon>Eukaryota</taxon>
        <taxon>Metazoa</taxon>
        <taxon>Ecdysozoa</taxon>
        <taxon>Nematoda</taxon>
        <taxon>Chromadorea</taxon>
        <taxon>Rhabditida</taxon>
        <taxon>Rhabditina</taxon>
        <taxon>Rhabditomorpha</taxon>
        <taxon>Rhabditoidea</taxon>
        <taxon>Rhabditidae</taxon>
        <taxon>Peloderinae</taxon>
        <taxon>Caenorhabditis</taxon>
    </lineage>
</organism>
<comment type="function">
    <text evidence="1 6">Pore-forming subunit of a mechanosensitive non-specific cation channel (By similarity). Generates currents characterized by a linear current-voltage relationship (By similarity). Plays a role in reproduction by positively regulating inter-tissue signaling to promote oocyte maturation, ovulation and fertilization, and sperm navigation from and to the spermatheca (PubMed:32490809). May play a role in regulating cytosolic and endoplasmic reticulum calcium ion release (PubMed:32490809).</text>
</comment>
<comment type="subcellular location">
    <subcellularLocation>
        <location evidence="6">Cell membrane</location>
        <topology evidence="2">Multi-pass membrane protein</topology>
    </subcellularLocation>
</comment>
<comment type="alternative products">
    <event type="alternative splicing"/>
    <event type="alternative initiation"/>
    <isoform>
        <id>A0A061ACU2-1</id>
        <name evidence="15">g</name>
        <sequence type="displayed"/>
    </isoform>
    <isoform>
        <id>A0A061ACU2-2</id>
        <name evidence="9">a</name>
        <sequence type="described" ref="VSP_060811 VSP_060812"/>
    </isoform>
    <isoform>
        <id>A0A061ACU2-3</id>
        <name evidence="10">b</name>
        <sequence type="described" ref="VSP_060810 VSP_060811 VSP_060812"/>
    </isoform>
    <isoform>
        <id>A0A061ACU2-4</id>
        <name evidence="11">c</name>
        <sequence type="described" ref="VSP_060812"/>
    </isoform>
    <isoform>
        <id>A0A061ACU2-5</id>
        <name evidence="12">d</name>
        <sequence type="described" ref="VSP_060810 VSP_060812"/>
    </isoform>
    <isoform>
        <id>A0A061ACU2-6</id>
        <name evidence="13">e</name>
        <sequence type="described" ref="VSP_060811"/>
    </isoform>
    <isoform>
        <id>A0A061ACU2-7</id>
        <name evidence="14">f</name>
        <sequence type="described" ref="VSP_060810 VSP_060811"/>
    </isoform>
    <isoform>
        <id>A0A061ACU2-8</id>
        <name evidence="16">h</name>
        <sequence type="described" ref="VSP_060810"/>
    </isoform>
    <isoform>
        <id>A0A061ACU2-9</id>
        <name evidence="17">i</name>
        <sequence type="described" ref="VSP_060808"/>
    </isoform>
    <isoform>
        <id>A0A061ACU2-10</id>
        <name evidence="18">j</name>
        <sequence type="described" ref="VSP_060808 VSP_060813"/>
    </isoform>
    <isoform>
        <id>A0A061ACU2-11</id>
        <name evidence="19">k</name>
        <sequence type="described" ref="VSP_060809"/>
    </isoform>
    <isoform>
        <id>A0A061ACU2-12</id>
        <name evidence="20">l</name>
        <sequence type="described" ref="VSP_060807"/>
    </isoform>
</comment>
<comment type="tissue specificity">
    <text evidence="6">Expressed in the pharyngeal-intestinal and spermathecal-uterine valves and in multiple reproductive tissues including the germline, somatic oviduct, and spermatheca (PubMed:32490809). During reproduction, it is expressed in sheath cells, sperm, both spermathecal valves and the spermathecal bag cells (PubMed:32490809).</text>
</comment>
<comment type="developmental stage">
    <text evidence="6">Expressed from embryogenesis to adulthood (PubMed:32490809). Expressed in one-cell embryos, 4-cell embryos and multi-cell embryos (PubMed:32490809).</text>
</comment>
<comment type="disruption phenotype">
    <text evidence="6">Reduced brood size due to defects in ovulation with incomplete constriction of the sheath cells impairing oocyte transit, an accumulation of ooplasm in the uterus as a result of 'crushed' oocytes, caused by incomplete opening of the spermathecal-uterine valve, which in wild-type allows the fertilized oocyte to be expelled into the uterus, and sperm navigation defects.</text>
</comment>
<comment type="miscellaneous">
    <text evidence="7">Piezo comes from the Greek 'piesi' meaning pressure.</text>
</comment>
<comment type="miscellaneous">
    <molecule>Isoform a</molecule>
    <text evidence="7">Produced by alternative splicing.</text>
</comment>
<comment type="miscellaneous">
    <molecule>Isoform b</molecule>
    <text evidence="7">Produced by alternative splicing.</text>
</comment>
<comment type="miscellaneous">
    <molecule>Isoform c</molecule>
    <text evidence="7">Produced by alternative splicing.</text>
</comment>
<comment type="miscellaneous">
    <molecule>Isoform d</molecule>
    <text evidence="7">Produced by alternative splicing.</text>
</comment>
<comment type="miscellaneous">
    <molecule>Isoform e</molecule>
    <text evidence="7">Produced by alternative splicing.</text>
</comment>
<comment type="miscellaneous">
    <molecule>Isoform f</molecule>
    <text evidence="7">Produced by alternative splicing.</text>
</comment>
<comment type="miscellaneous">
    <molecule>Isoform g</molecule>
    <text evidence="7">Produced by alternative splicing.</text>
</comment>
<comment type="miscellaneous">
    <molecule>Isoform h</molecule>
    <text evidence="7">Produced by alternative splicing.</text>
</comment>
<comment type="miscellaneous">
    <molecule>Isoform i</molecule>
    <text evidence="7">Produced by alternative splicing.</text>
</comment>
<comment type="miscellaneous">
    <molecule>Isoform j</molecule>
    <text evidence="7">Produced by alternative splicing.</text>
</comment>
<comment type="miscellaneous">
    <molecule>Isoform k</molecule>
    <text evidence="7">Produced by alternative initiation at Met-755 of isoform g.</text>
</comment>
<comment type="miscellaneous">
    <molecule>Isoform l</molecule>
    <text evidence="7">Produced by alternative initiation at Met-1405 of isoform g.</text>
</comment>
<comment type="similarity">
    <text evidence="7">Belongs to the PIEZO (TC 1.A.75) family.</text>
</comment>
<sequence length="2442" mass="276793">MTVPPLLKSCVVKLLLPAALLAAAIIRPSFLSIGYVLLALVSAVLPPIRKSLALPKLVGTFVIITFLFCLAVALGVGSYQISEQVVHKNDRTYICNRSDTTLFRSIGLVRFHPTGTFESTRAFLPEIIATSAALLTIIIVMFLSHRDEQLDVVGDVVTVRSESGREQRRQRKLAAIMWSAIGNSLRRLTNFVLFLFTAYVGIVKPSLSNSIYFLAFLFISTWWSTYTPLRHGVYNQIKKFLIFYSALHFLVLYTYQIPIVHHSWLPTGSFLPRLFGLTVLMDSSCPEWWKFPFVAPDFNDDDLIMKWPLYANPIVVLVFFYLTVAQYKFTRNGSREYIDDNEYGSSVHEERFVSAGTVETNVDDVGQLISISESTASAPSGRGRGNTLLLSNASSSANDDEQGRARSRSPLRNGEEQGSIPLRKVTSQVVDRNKLSNIFNTTAPGDKESAASKGMIAVMTFVIFHSYSIALTAMMTWALLYHSIFGLILLILTCILWIFRDTRKSSFAMAPIILMYIEFLLILQYFLSMDIHAEIGDPAWMNFVGIEWTTLPVHAVIILCVQTLLTLPVFLLLRLARREKFYESLSDYERQRRINSYGTFGASKTGAGGVAVAKFQDPKSRKFAAFVEYLSNKVSVYFIFVVSVVLLVVSTCFAPNFYNILFFALWALNLIYLKFSFRLYRGLAYAFWLTLTFYTSIVIIALYIYQFPGVSQWIIRNTSLSQEWLNAIGLVDFRAIGESGALFLQLLAPIALFVVTMLQLKFFHGPWSRATSPRRAENDPPTSTTEAAAVASTSGTQGRAHAAGDTLVKKLHKLANQTIELLWRFFEVHISKIVFVIIAIFIANNINALYIPLVILLSLAICLPSAADGIFSLFMCAYLFLVALSKMIYQLDIVPELSQIDRGVGADNCSHGNISMPEWFGLKKEVEGTEPIYMLFGVIVSIIALAFQSIVIYRQRHYRASLGLPESMRAKVFPDFHHSHFDRSLKNAIQFLIDYGFYKFGLEITMIAIGIDIFNRMDALAAIQCFWLVLFALNKRVFVRRIWVFYVIYMAILYPLQFFSYVGLPPDSCIEYPWSYWIPSYSDDARFNLSYLLNLSIYGVNWPSAYLIGDFFVLLLASCQLAVFRREGEDNDSIYNDGNFVIKPENPQYDFIDTKKSYVDYFKSFVFHYGHWITLMSTLAAGIAGTSLFALGYIIFTLTMLWSGNNLYVMNSTLRSFEHTLKRWNALLGYTLFTITMKVCLQIFGCVFLSWFDQSGGWGKTLCIVRQLFSITCVNNECHVLKELEDFSKACAVETKEGNIGFDVIALSFLVFQIRIFHSWYFQHCMVEYRSEVILANRGAVLKNQLIEKEMKEQNEQQKAKFNDIRRRTEAIRERYQKQIERGAAERDFEPVTYGHAKRAGDYYMFKYDPENDDLVEPVDSFVPEVDPKATAYDRLDPGQIMYAATAHDLDLAKTVQQVKKGDTIKDPDSRALIAVSEPEARKPGGTEETDGDEDEDNKDSKVESTAKFIQKMIASALDLCSVTLNKLCREHRYVGFVLSKEKQKLKSGHSESLSNTSRKLTDIRSAVDLPSLQLVQSANDVEKMETAVSVDWQQKSSATRLLNAVVNCIGAHTDILCYFFAIMTQVMTGGLITLPLPLMSLFWGNLSNPRPSKFFWVTMITYTECVIVIKFVCQFAFMPYNSITWRTEHQMDPMSLDKLFGVSQRDSFALWDIVLLFSLFFHRYMLRKLGLWKDANLTDTFTLKEEPRSASGSDTGSPKKIAQEPKVVVTQSDTLEGTSGGEIVIPSDPNAVSNMEELDCEPPIPEKQSGPIGRFIHQLFHPKFRYIRDLYPIMFGIDVICFLIMTFGYSAFGEGGSGNVLDDVKASRIPVTLVVMLVGMTLAIIIDRALYLRKSVVGKLIYQVLMIAFLHIWVFLVLPNMTRRSAISNHVAQALYVIKSCYFLVSAWQIRNGYPELCIGNLLTHSYGMTNMIAFKVFMNIPFLFELRTAIDWTWTDTSMPLFDFFNMENFYAHIFNIKCARQFEAAYPAPRGIPKGKLVKYMMGFPIIIGVVIFIFSPLLLWSLLNQIGTISMPEKVTLRISIEGYPPLYEMEAQGSNHDNAELGMIKPDQLASLNQALTDSYTTRDTNSILRSRMSVSYLKGYTYEDILIVRFRPESEIYWPISQDSRNAMIDKLSRNTSVNFEVSLEFTRPYDPNENAALKHSKSWLVPISLDMTIRAKIQSALRGDPGHPILIPQSIPAFIQVPNQGELTLPTSIGNTIINDGNPRINTTGMEKSDEARAWFDSLTLNLEQGKSQNEKMWIATSEHPGDQNAKLWIKTANTTYSGRPYLQVVGFIDRAFPSFLAKVFKGGVIAVYLSVILVVGRGLVRGIFTTSPSTVMFTELPNADHLLKICLDIYLVREAKDFMLEQDLFAKLIFLFRSPATLIEWTRMSKKKQE</sequence>
<keyword id="KW-0002">3D-structure</keyword>
<keyword id="KW-0024">Alternative initiation</keyword>
<keyword id="KW-0025">Alternative splicing</keyword>
<keyword id="KW-1003">Cell membrane</keyword>
<keyword id="KW-0325">Glycoprotein</keyword>
<keyword id="KW-0407">Ion channel</keyword>
<keyword id="KW-0406">Ion transport</keyword>
<keyword id="KW-0472">Membrane</keyword>
<keyword id="KW-1185">Reference proteome</keyword>
<keyword id="KW-0812">Transmembrane</keyword>
<keyword id="KW-1133">Transmembrane helix</keyword>
<keyword id="KW-0813">Transport</keyword>
<dbReference type="EMBL" id="BX284604">
    <property type="protein sequence ID" value="CAA92444.3"/>
    <property type="molecule type" value="Genomic_DNA"/>
</dbReference>
<dbReference type="EMBL" id="BX284604">
    <property type="protein sequence ID" value="CAA92491.3"/>
    <property type="molecule type" value="Genomic_DNA"/>
</dbReference>
<dbReference type="EMBL" id="BX284604">
    <property type="protein sequence ID" value="CAA92492.2"/>
    <property type="molecule type" value="Genomic_DNA"/>
</dbReference>
<dbReference type="EMBL" id="BX284604">
    <property type="protein sequence ID" value="CAX32485.2"/>
    <property type="molecule type" value="Genomic_DNA"/>
</dbReference>
<dbReference type="EMBL" id="BX284604">
    <property type="protein sequence ID" value="CAZ65467.2"/>
    <property type="molecule type" value="Genomic_DNA"/>
</dbReference>
<dbReference type="EMBL" id="BX284604">
    <property type="protein sequence ID" value="CBH29652.2"/>
    <property type="molecule type" value="Genomic_DNA"/>
</dbReference>
<dbReference type="EMBL" id="BX284604">
    <property type="protein sequence ID" value="CCG28215.2"/>
    <property type="molecule type" value="Genomic_DNA"/>
</dbReference>
<dbReference type="EMBL" id="BX284604">
    <property type="protein sequence ID" value="CCG28216.2"/>
    <property type="molecule type" value="Genomic_DNA"/>
</dbReference>
<dbReference type="EMBL" id="BX284604">
    <property type="protein sequence ID" value="CDR32749.1"/>
    <property type="molecule type" value="Genomic_DNA"/>
</dbReference>
<dbReference type="EMBL" id="BX284604">
    <property type="protein sequence ID" value="CDR32750.1"/>
    <property type="molecule type" value="Genomic_DNA"/>
</dbReference>
<dbReference type="EMBL" id="BX284604">
    <property type="protein sequence ID" value="CDR32751.1"/>
    <property type="molecule type" value="Genomic_DNA"/>
</dbReference>
<dbReference type="EMBL" id="BX284604">
    <property type="protein sequence ID" value="CDR32752.1"/>
    <property type="molecule type" value="Genomic_DNA"/>
</dbReference>
<dbReference type="PIR" id="T25030">
    <property type="entry name" value="T25030"/>
</dbReference>
<dbReference type="RefSeq" id="NP_001255385.2">
    <molecule id="A0A061ACU2-9"/>
    <property type="nucleotide sequence ID" value="NM_001268456.4"/>
</dbReference>
<dbReference type="RefSeq" id="NP_001255386.2">
    <molecule id="A0A061ACU2-10"/>
    <property type="nucleotide sequence ID" value="NM_001268457.4"/>
</dbReference>
<dbReference type="RefSeq" id="NP_001255387.2">
    <molecule id="A0A061ACU2-4"/>
    <property type="nucleotide sequence ID" value="NM_001268458.4"/>
</dbReference>
<dbReference type="RefSeq" id="NP_001255388.2">
    <molecule id="A0A061ACU2-5"/>
    <property type="nucleotide sequence ID" value="NM_001268459.3"/>
</dbReference>
<dbReference type="RefSeq" id="NP_001255389.2">
    <molecule id="A0A061ACU2-2"/>
    <property type="nucleotide sequence ID" value="NM_001268460.4"/>
</dbReference>
<dbReference type="RefSeq" id="NP_001255390.2">
    <molecule id="A0A061ACU2-3"/>
    <property type="nucleotide sequence ID" value="NM_001268461.4"/>
</dbReference>
<dbReference type="RefSeq" id="NP_001255391.2">
    <molecule id="A0A061ACU2-6"/>
    <property type="nucleotide sequence ID" value="NM_001268462.4"/>
</dbReference>
<dbReference type="RefSeq" id="NP_001293677.1">
    <molecule id="A0A061ACU2-12"/>
    <property type="nucleotide sequence ID" value="NM_001306748.3"/>
</dbReference>
<dbReference type="RefSeq" id="NP_001293979.1">
    <molecule id="A0A061ACU2-7"/>
    <property type="nucleotide sequence ID" value="NM_001307050.3"/>
</dbReference>
<dbReference type="RefSeq" id="NP_001293980.1">
    <molecule id="A0A061ACU2-1"/>
    <property type="nucleotide sequence ID" value="NM_001307051.3"/>
</dbReference>
<dbReference type="RefSeq" id="NP_001293981.1">
    <molecule id="A0A061ACU2-8"/>
    <property type="nucleotide sequence ID" value="NM_001307052.3"/>
</dbReference>
<dbReference type="RefSeq" id="NP_001293982.1">
    <property type="nucleotide sequence ID" value="NM_001307053.1"/>
</dbReference>
<dbReference type="RefSeq" id="NP_001368483.1">
    <molecule id="A0A061ACU2-11"/>
    <property type="nucleotide sequence ID" value="NM_001380408.1"/>
</dbReference>
<dbReference type="PDB" id="4PKE">
    <property type="method" value="X-ray"/>
    <property type="resolution" value="2.50 A"/>
    <property type="chains" value="A=2065-2346"/>
</dbReference>
<dbReference type="PDB" id="4PKX">
    <property type="method" value="X-ray"/>
    <property type="resolution" value="2.54 A"/>
    <property type="chains" value="A=2065-2346"/>
</dbReference>
<dbReference type="PDBsum" id="4PKE"/>
<dbReference type="PDBsum" id="4PKX"/>
<dbReference type="SMR" id="A0A061ACU2"/>
<dbReference type="FunCoup" id="A0A061ACU2">
    <property type="interactions" value="926"/>
</dbReference>
<dbReference type="STRING" id="6239.C10C5.1g.1"/>
<dbReference type="TCDB" id="1.A.75.1.8">
    <property type="family name" value="the mechanical nociceptor, piezo (piezo) family"/>
</dbReference>
<dbReference type="GlyCosmos" id="A0A061ACU2">
    <property type="glycosylation" value="10 sites, No reported glycans"/>
</dbReference>
<dbReference type="PaxDb" id="6239-T20D3.11b"/>
<dbReference type="EnsemblMetazoa" id="C10C5.1a.1">
    <molecule id="A0A061ACU2-2"/>
    <property type="protein sequence ID" value="C10C5.1a.1"/>
    <property type="gene ID" value="WBGene00007505"/>
</dbReference>
<dbReference type="EnsemblMetazoa" id="C10C5.1b.1">
    <molecule id="A0A061ACU2-3"/>
    <property type="protein sequence ID" value="C10C5.1b.1"/>
    <property type="gene ID" value="WBGene00007505"/>
</dbReference>
<dbReference type="EnsemblMetazoa" id="C10C5.1c.1">
    <molecule id="A0A061ACU2-4"/>
    <property type="protein sequence ID" value="C10C5.1c.1"/>
    <property type="gene ID" value="WBGene00007505"/>
</dbReference>
<dbReference type="EnsemblMetazoa" id="C10C5.1d.1">
    <molecule id="A0A061ACU2-5"/>
    <property type="protein sequence ID" value="C10C5.1d.1"/>
    <property type="gene ID" value="WBGene00007505"/>
</dbReference>
<dbReference type="EnsemblMetazoa" id="C10C5.1e.1">
    <molecule id="A0A061ACU2-6"/>
    <property type="protein sequence ID" value="C10C5.1e.1"/>
    <property type="gene ID" value="WBGene00007505"/>
</dbReference>
<dbReference type="EnsemblMetazoa" id="C10C5.1f.1">
    <molecule id="A0A061ACU2-7"/>
    <property type="protein sequence ID" value="C10C5.1f.1"/>
    <property type="gene ID" value="WBGene00007505"/>
</dbReference>
<dbReference type="EnsemblMetazoa" id="C10C5.1g.1">
    <molecule id="A0A061ACU2-1"/>
    <property type="protein sequence ID" value="C10C5.1g.1"/>
    <property type="gene ID" value="WBGene00007505"/>
</dbReference>
<dbReference type="EnsemblMetazoa" id="C10C5.1h.1">
    <molecule id="A0A061ACU2-8"/>
    <property type="protein sequence ID" value="C10C5.1h.1"/>
    <property type="gene ID" value="WBGene00007505"/>
</dbReference>
<dbReference type="EnsemblMetazoa" id="C10C5.1i.1">
    <molecule id="A0A061ACU2-9"/>
    <property type="protein sequence ID" value="C10C5.1i.1"/>
    <property type="gene ID" value="WBGene00007505"/>
</dbReference>
<dbReference type="EnsemblMetazoa" id="C10C5.1j.1">
    <molecule id="A0A061ACU2-10"/>
    <property type="protein sequence ID" value="C10C5.1j.1"/>
    <property type="gene ID" value="WBGene00007505"/>
</dbReference>
<dbReference type="EnsemblMetazoa" id="C10C5.1k.1">
    <molecule id="A0A061ACU2-11"/>
    <property type="protein sequence ID" value="C10C5.1k.1"/>
    <property type="gene ID" value="WBGene00007505"/>
</dbReference>
<dbReference type="EnsemblMetazoa" id="C10C5.1l.1">
    <molecule id="A0A061ACU2-12"/>
    <property type="protein sequence ID" value="C10C5.1l.1"/>
    <property type="gene ID" value="WBGene00007505"/>
</dbReference>
<dbReference type="GeneID" id="182492"/>
<dbReference type="KEGG" id="cel:CELE_C10C5.1"/>
<dbReference type="UCSC" id="C10C5.1">
    <property type="organism name" value="c. elegans"/>
</dbReference>
<dbReference type="UCSC" id="T20D3.11">
    <property type="organism name" value="c. elegans"/>
</dbReference>
<dbReference type="AGR" id="WB:WBGene00007505"/>
<dbReference type="CTD" id="182492"/>
<dbReference type="WormBase" id="C10C5.1a">
    <molecule id="A0A061ACU2-2"/>
    <property type="protein sequence ID" value="CE49845"/>
    <property type="gene ID" value="WBGene00007505"/>
    <property type="gene designation" value="pezo-1"/>
</dbReference>
<dbReference type="WormBase" id="C10C5.1b">
    <molecule id="A0A061ACU2-3"/>
    <property type="protein sequence ID" value="CE49903"/>
    <property type="gene ID" value="WBGene00007505"/>
    <property type="gene designation" value="pezo-1"/>
</dbReference>
<dbReference type="WormBase" id="C10C5.1c">
    <molecule id="A0A061ACU2-4"/>
    <property type="protein sequence ID" value="CE49745"/>
    <property type="gene ID" value="WBGene00007505"/>
    <property type="gene designation" value="pezo-1"/>
</dbReference>
<dbReference type="WormBase" id="C10C5.1d">
    <molecule id="A0A061ACU2-5"/>
    <property type="protein sequence ID" value="CE49867"/>
    <property type="gene ID" value="WBGene00007505"/>
    <property type="gene designation" value="pezo-1"/>
</dbReference>
<dbReference type="WormBase" id="C10C5.1e">
    <molecule id="A0A061ACU2-6"/>
    <property type="protein sequence ID" value="CE49888"/>
    <property type="gene ID" value="WBGene00007505"/>
    <property type="gene designation" value="pezo-1"/>
</dbReference>
<dbReference type="WormBase" id="C10C5.1f">
    <molecule id="A0A061ACU2-7"/>
    <property type="protein sequence ID" value="CE49932"/>
    <property type="gene ID" value="WBGene00007505"/>
    <property type="gene designation" value="pezo-1"/>
</dbReference>
<dbReference type="WormBase" id="C10C5.1g">
    <molecule id="A0A061ACU2-1"/>
    <property type="protein sequence ID" value="CE49794"/>
    <property type="gene ID" value="WBGene00007505"/>
    <property type="gene designation" value="pezo-1"/>
</dbReference>
<dbReference type="WormBase" id="C10C5.1h">
    <molecule id="A0A061ACU2-8"/>
    <property type="protein sequence ID" value="CE49859"/>
    <property type="gene ID" value="WBGene00007505"/>
    <property type="gene designation" value="pezo-1"/>
</dbReference>
<dbReference type="WormBase" id="C10C5.1i">
    <molecule id="A0A061ACU2-9"/>
    <property type="protein sequence ID" value="CE48356"/>
    <property type="gene ID" value="WBGene00007505"/>
    <property type="gene designation" value="pezo-1"/>
</dbReference>
<dbReference type="WormBase" id="C10C5.1j">
    <molecule id="A0A061ACU2-10"/>
    <property type="protein sequence ID" value="CE48376"/>
    <property type="gene ID" value="WBGene00007505"/>
    <property type="gene designation" value="pezo-1"/>
</dbReference>
<dbReference type="WormBase" id="C10C5.1k">
    <molecule id="A0A061ACU2-11"/>
    <property type="protein sequence ID" value="CE49828"/>
    <property type="gene ID" value="WBGene00007505"/>
    <property type="gene designation" value="pezo-1"/>
</dbReference>
<dbReference type="WormBase" id="C10C5.1l">
    <molecule id="A0A061ACU2-12"/>
    <property type="protein sequence ID" value="CE23991"/>
    <property type="gene ID" value="WBGene00007505"/>
    <property type="gene designation" value="pezo-1"/>
</dbReference>
<dbReference type="eggNOG" id="KOG1893">
    <property type="taxonomic scope" value="Eukaryota"/>
</dbReference>
<dbReference type="GeneTree" id="ENSGT00940000166986"/>
<dbReference type="HOGENOM" id="CLU_000512_0_0_1"/>
<dbReference type="InParanoid" id="A0A061ACU2"/>
<dbReference type="OMA" id="WCPLLAF"/>
<dbReference type="OrthoDB" id="303066at2759"/>
<dbReference type="EvolutionaryTrace" id="A0A061ACU2"/>
<dbReference type="PRO" id="PR:A0A061ACU2"/>
<dbReference type="Proteomes" id="UP000001940">
    <property type="component" value="Chromosome IV"/>
</dbReference>
<dbReference type="Bgee" id="WBGene00007505">
    <property type="expression patterns" value="Expressed in pharyngeal muscle cell (C elegans) and 4 other cell types or tissues"/>
</dbReference>
<dbReference type="ExpressionAtlas" id="A0A061ACU2">
    <property type="expression patterns" value="baseline and differential"/>
</dbReference>
<dbReference type="GO" id="GO:0005886">
    <property type="term" value="C:plasma membrane"/>
    <property type="evidence" value="ECO:0000314"/>
    <property type="project" value="UniProtKB"/>
</dbReference>
<dbReference type="GO" id="GO:0008381">
    <property type="term" value="F:mechanosensitive monoatomic ion channel activity"/>
    <property type="evidence" value="ECO:0000318"/>
    <property type="project" value="GO_Central"/>
</dbReference>
<dbReference type="GO" id="GO:0005261">
    <property type="term" value="F:monoatomic cation channel activity"/>
    <property type="evidence" value="ECO:0000318"/>
    <property type="project" value="GO_Central"/>
</dbReference>
<dbReference type="GO" id="GO:0071260">
    <property type="term" value="P:cellular response to mechanical stimulus"/>
    <property type="evidence" value="ECO:0000318"/>
    <property type="project" value="GO_Central"/>
</dbReference>
<dbReference type="GO" id="GO:0050982">
    <property type="term" value="P:detection of mechanical stimulus"/>
    <property type="evidence" value="ECO:0000318"/>
    <property type="project" value="GO_Central"/>
</dbReference>
<dbReference type="GO" id="GO:0030317">
    <property type="term" value="P:flagellated sperm motility"/>
    <property type="evidence" value="ECO:0000315"/>
    <property type="project" value="UniProtKB"/>
</dbReference>
<dbReference type="GO" id="GO:0098655">
    <property type="term" value="P:monoatomic cation transmembrane transport"/>
    <property type="evidence" value="ECO:0000250"/>
    <property type="project" value="WormBase"/>
</dbReference>
<dbReference type="GO" id="GO:0090727">
    <property type="term" value="P:positive regulation of brood size"/>
    <property type="evidence" value="ECO:0000315"/>
    <property type="project" value="UniProtKB"/>
</dbReference>
<dbReference type="GO" id="GO:0060279">
    <property type="term" value="P:positive regulation of ovulation"/>
    <property type="evidence" value="ECO:0000315"/>
    <property type="project" value="UniProtKB"/>
</dbReference>
<dbReference type="GO" id="GO:0042391">
    <property type="term" value="P:regulation of membrane potential"/>
    <property type="evidence" value="ECO:0000318"/>
    <property type="project" value="GO_Central"/>
</dbReference>
<dbReference type="GO" id="GO:0009612">
    <property type="term" value="P:response to mechanical stimulus"/>
    <property type="evidence" value="ECO:0000250"/>
    <property type="project" value="WormBase"/>
</dbReference>
<dbReference type="InterPro" id="IPR027272">
    <property type="entry name" value="Piezo"/>
</dbReference>
<dbReference type="InterPro" id="IPR031334">
    <property type="entry name" value="Piezo_cap_dom"/>
</dbReference>
<dbReference type="InterPro" id="IPR056770">
    <property type="entry name" value="Piezo_THU9_anchor"/>
</dbReference>
<dbReference type="InterPro" id="IPR056769">
    <property type="entry name" value="Piezo_TM1-24"/>
</dbReference>
<dbReference type="InterPro" id="IPR031805">
    <property type="entry name" value="Piezo_TM25-28"/>
</dbReference>
<dbReference type="InterPro" id="IPR056768">
    <property type="entry name" value="THU_Piezo"/>
</dbReference>
<dbReference type="PANTHER" id="PTHR13167">
    <property type="entry name" value="PIEZO-TYPE MECHANOSENSITIVE ION CHANNEL COMPONENT"/>
    <property type="match status" value="1"/>
</dbReference>
<dbReference type="PANTHER" id="PTHR13167:SF25">
    <property type="entry name" value="PIEZO-TYPE MECHANOSENSITIVE ION CHANNEL COMPONENT"/>
    <property type="match status" value="1"/>
</dbReference>
<dbReference type="Pfam" id="PF12166">
    <property type="entry name" value="Piezo_cap"/>
    <property type="match status" value="1"/>
</dbReference>
<dbReference type="Pfam" id="PF24874">
    <property type="entry name" value="Piezo_THU9_anchor"/>
    <property type="match status" value="1"/>
</dbReference>
<dbReference type="Pfam" id="PF24871">
    <property type="entry name" value="Piezo_TM1-24"/>
    <property type="match status" value="1"/>
</dbReference>
<dbReference type="Pfam" id="PF15917">
    <property type="entry name" value="Piezo_TM25-28"/>
    <property type="match status" value="1"/>
</dbReference>
<dbReference type="Pfam" id="PF23188">
    <property type="entry name" value="THU_Piezo1"/>
    <property type="match status" value="1"/>
</dbReference>
<gene>
    <name evidence="15" type="primary">pezo-1</name>
    <name evidence="15" type="ORF">C10C5.1</name>
</gene>
<protein>
    <recommendedName>
        <fullName evidence="15">Piezo-type mechanosensitive ion channel component 1</fullName>
    </recommendedName>
</protein>
<accession>A0A061ACU2</accession>
<accession>A0A061AE33</accession>
<accession>A0A061AJB7</accession>
<accession>A0A061AL01</accession>
<accession>A0A067XG44</accession>
<accession>B9WRT3</accession>
<accession>C6KRJ3</accession>
<accession>D0VWN8</accession>
<accession>H9G2S2</accession>
<accession>H9G2S3</accession>
<accession>O01260</accession>
<accession>Q17897</accession>
<name>PIEZ1_CAEEL</name>
<reference evidence="8" key="1">
    <citation type="journal article" date="1998" name="Science">
        <title>Genome sequence of the nematode C. elegans: a platform for investigating biology.</title>
        <authorList>
            <consortium name="The C. elegans sequencing consortium"/>
        </authorList>
    </citation>
    <scope>NUCLEOTIDE SEQUENCE [LARGE SCALE GENOMIC DNA]</scope>
    <source>
        <strain evidence="8">Bristol N2</strain>
    </source>
</reference>
<reference evidence="7" key="2">
    <citation type="journal article" date="2020" name="Elife">
        <title>Caenorhabditis elegans PIEZO channel coordinates multiple reproductive tissues to govern ovulation.</title>
        <authorList>
            <person name="Bai X."/>
            <person name="Bouffard J."/>
            <person name="Lord A."/>
            <person name="Brugman K."/>
            <person name="Sternberg P.W."/>
            <person name="Cram E.J."/>
            <person name="Golden A."/>
        </authorList>
    </citation>
    <scope>FUNCTION</scope>
    <scope>SUBCELLULAR LOCATION</scope>
    <scope>TISSUE SPECIFICITY</scope>
    <scope>DEVELOPMENTAL STAGE</scope>
    <scope>DISRUPTION PHENOTYPE</scope>
    <scope>MUTAGENESIS OF ARG-2405</scope>
</reference>
<reference evidence="21 22" key="3">
    <citation type="journal article" date="2014" name="Structure">
        <title>The structure of a conserved piezo channel domain reveals a topologically distinct beta sandwich fold.</title>
        <authorList>
            <person name="Kamajaya A."/>
            <person name="Kaiser J.T."/>
            <person name="Lee J."/>
            <person name="Reid M."/>
            <person name="Rees D.C."/>
        </authorList>
    </citation>
    <scope>X-RAY CRYSTALLOGRAPHY (2.50 ANGSTROMS) OF 2065-2346</scope>
    <scope>MUTAGENESIS OF MET-2094</scope>
</reference>
<evidence type="ECO:0000250" key="1">
    <source>
        <dbReference type="UniProtKB" id="Q92508"/>
    </source>
</evidence>
<evidence type="ECO:0000255" key="2"/>
<evidence type="ECO:0000255" key="3">
    <source>
        <dbReference type="PROSITE-ProRule" id="PRU00498"/>
    </source>
</evidence>
<evidence type="ECO:0000256" key="4">
    <source>
        <dbReference type="SAM" id="MobiDB-lite"/>
    </source>
</evidence>
<evidence type="ECO:0000269" key="5">
    <source>
    </source>
</evidence>
<evidence type="ECO:0000269" key="6">
    <source>
    </source>
</evidence>
<evidence type="ECO:0000305" key="7"/>
<evidence type="ECO:0000312" key="8">
    <source>
        <dbReference type="Proteomes" id="UP000001940"/>
    </source>
</evidence>
<evidence type="ECO:0000312" key="9">
    <source>
        <dbReference type="WormBase" id="C10C5.1a"/>
    </source>
</evidence>
<evidence type="ECO:0000312" key="10">
    <source>
        <dbReference type="WormBase" id="C10C5.1b"/>
    </source>
</evidence>
<evidence type="ECO:0000312" key="11">
    <source>
        <dbReference type="WormBase" id="C10C5.1c"/>
    </source>
</evidence>
<evidence type="ECO:0000312" key="12">
    <source>
        <dbReference type="WormBase" id="C10C5.1d"/>
    </source>
</evidence>
<evidence type="ECO:0000312" key="13">
    <source>
        <dbReference type="WormBase" id="C10C5.1e"/>
    </source>
</evidence>
<evidence type="ECO:0000312" key="14">
    <source>
        <dbReference type="WormBase" id="C10C5.1f"/>
    </source>
</evidence>
<evidence type="ECO:0000312" key="15">
    <source>
        <dbReference type="WormBase" id="C10C5.1g"/>
    </source>
</evidence>
<evidence type="ECO:0000312" key="16">
    <source>
        <dbReference type="WormBase" id="C10C5.1h"/>
    </source>
</evidence>
<evidence type="ECO:0000312" key="17">
    <source>
        <dbReference type="WormBase" id="C10C5.1i"/>
    </source>
</evidence>
<evidence type="ECO:0000312" key="18">
    <source>
        <dbReference type="WormBase" id="C10C5.1j"/>
    </source>
</evidence>
<evidence type="ECO:0000312" key="19">
    <source>
        <dbReference type="WormBase" id="C10C5.1k"/>
    </source>
</evidence>
<evidence type="ECO:0000312" key="20">
    <source>
        <dbReference type="WormBase" id="C10C5.1l"/>
    </source>
</evidence>
<evidence type="ECO:0007744" key="21">
    <source>
        <dbReference type="PDB" id="4PKE"/>
    </source>
</evidence>
<evidence type="ECO:0007744" key="22">
    <source>
        <dbReference type="PDB" id="4PKX"/>
    </source>
</evidence>
<evidence type="ECO:0007829" key="23">
    <source>
        <dbReference type="PDB" id="4PKE"/>
    </source>
</evidence>
<evidence type="ECO:0007829" key="24">
    <source>
        <dbReference type="PDB" id="4PKX"/>
    </source>
</evidence>
<feature type="chain" id="PRO_0000451574" description="Piezo-type mechanosensitive ion channel component 1">
    <location>
        <begin position="1"/>
        <end position="2442"/>
    </location>
</feature>
<feature type="topological domain" description="Extracellular" evidence="7">
    <location>
        <begin position="1"/>
        <end position="5"/>
    </location>
</feature>
<feature type="transmembrane region" description="Helical; Name=1" evidence="2">
    <location>
        <begin position="6"/>
        <end position="26"/>
    </location>
</feature>
<feature type="topological domain" description="Cytoplasmic" evidence="7">
    <location>
        <position position="27"/>
    </location>
</feature>
<feature type="transmembrane region" description="Helical; Name=2" evidence="2">
    <location>
        <begin position="28"/>
        <end position="48"/>
    </location>
</feature>
<feature type="topological domain" description="Extracellular" evidence="7">
    <location>
        <begin position="49"/>
        <end position="56"/>
    </location>
</feature>
<feature type="transmembrane region" description="Helical; Name=3" evidence="2">
    <location>
        <begin position="57"/>
        <end position="77"/>
    </location>
</feature>
<feature type="topological domain" description="Cytoplasmic" evidence="7">
    <location>
        <begin position="78"/>
        <end position="122"/>
    </location>
</feature>
<feature type="transmembrane region" description="Helical; Name=4" evidence="2">
    <location>
        <begin position="123"/>
        <end position="143"/>
    </location>
</feature>
<feature type="topological domain" description="Extracellular" evidence="7">
    <location>
        <begin position="144"/>
        <end position="173"/>
    </location>
</feature>
<feature type="transmembrane region" description="Helical; Name=5" evidence="2">
    <location>
        <begin position="174"/>
        <end position="196"/>
    </location>
</feature>
<feature type="topological domain" description="Cytoplasmic" evidence="7">
    <location>
        <begin position="197"/>
        <end position="198"/>
    </location>
</feature>
<feature type="transmembrane region" description="Helical; Name=6" evidence="2">
    <location>
        <begin position="199"/>
        <end position="219"/>
    </location>
</feature>
<feature type="topological domain" description="Extracellular" evidence="7">
    <location>
        <begin position="220"/>
        <end position="239"/>
    </location>
</feature>
<feature type="transmembrane region" description="Helical; Name=7" evidence="2">
    <location>
        <begin position="240"/>
        <end position="260"/>
    </location>
</feature>
<feature type="topological domain" description="Cytoplasmic" evidence="7">
    <location>
        <begin position="261"/>
        <end position="303"/>
    </location>
</feature>
<feature type="transmembrane region" description="Helical; Name=8" evidence="2">
    <location>
        <begin position="304"/>
        <end position="324"/>
    </location>
</feature>
<feature type="topological domain" description="Extracellular" evidence="7">
    <location>
        <begin position="325"/>
        <end position="454"/>
    </location>
</feature>
<feature type="transmembrane region" description="Helical; Name=9" evidence="2">
    <location>
        <begin position="455"/>
        <end position="475"/>
    </location>
</feature>
<feature type="topological domain" description="Cytoplasmic" evidence="7">
    <location>
        <begin position="476"/>
        <end position="478"/>
    </location>
</feature>
<feature type="transmembrane region" description="Helical; Name=10" evidence="2">
    <location>
        <begin position="479"/>
        <end position="499"/>
    </location>
</feature>
<feature type="topological domain" description="Extracellular" evidence="7">
    <location>
        <begin position="500"/>
        <end position="506"/>
    </location>
</feature>
<feature type="transmembrane region" description="Helical; Name=11" evidence="2">
    <location>
        <begin position="507"/>
        <end position="527"/>
    </location>
</feature>
<feature type="topological domain" description="Cytoplasmic" evidence="7">
    <location>
        <begin position="528"/>
        <end position="552"/>
    </location>
</feature>
<feature type="transmembrane region" description="Helical; Name=12" evidence="2">
    <location>
        <begin position="553"/>
        <end position="573"/>
    </location>
</feature>
<feature type="topological domain" description="Extracellular" evidence="7">
    <location>
        <begin position="574"/>
        <end position="633"/>
    </location>
</feature>
<feature type="transmembrane region" description="Helical; Name=13" evidence="2">
    <location>
        <begin position="634"/>
        <end position="654"/>
    </location>
</feature>
<feature type="topological domain" description="Cytoplasmic" evidence="7">
    <location>
        <begin position="655"/>
        <end position="656"/>
    </location>
</feature>
<feature type="transmembrane region" description="Helical; Name=14" evidence="2">
    <location>
        <begin position="657"/>
        <end position="677"/>
    </location>
</feature>
<feature type="topological domain" description="Extracellular" evidence="7">
    <location>
        <begin position="678"/>
        <end position="683"/>
    </location>
</feature>
<feature type="transmembrane region" description="Helical; Name=15" evidence="2">
    <location>
        <begin position="684"/>
        <end position="704"/>
    </location>
</feature>
<feature type="topological domain" description="Cytoplasmic" evidence="7">
    <location>
        <begin position="705"/>
        <end position="739"/>
    </location>
</feature>
<feature type="transmembrane region" description="Helical; Name=16" evidence="2">
    <location>
        <begin position="740"/>
        <end position="760"/>
    </location>
</feature>
<feature type="topological domain" description="Extracellular" evidence="7">
    <location>
        <begin position="761"/>
        <end position="832"/>
    </location>
</feature>
<feature type="transmembrane region" description="Helical; Name=17" evidence="2">
    <location>
        <begin position="833"/>
        <end position="853"/>
    </location>
</feature>
<feature type="topological domain" description="Cytoplasmic" evidence="7">
    <location>
        <begin position="854"/>
        <end position="874"/>
    </location>
</feature>
<feature type="transmembrane region" description="Helical; Name=18" evidence="2">
    <location>
        <begin position="875"/>
        <end position="895"/>
    </location>
</feature>
<feature type="topological domain" description="Extracellular" evidence="7">
    <location>
        <begin position="896"/>
        <end position="931"/>
    </location>
</feature>
<feature type="transmembrane region" description="Helical; Name=19" evidence="2">
    <location>
        <begin position="932"/>
        <end position="952"/>
    </location>
</feature>
<feature type="topological domain" description="Cytoplasmic" evidence="7">
    <location>
        <begin position="953"/>
        <end position="990"/>
    </location>
</feature>
<feature type="transmembrane region" description="Helical; Name=20" evidence="2">
    <location>
        <begin position="991"/>
        <end position="1011"/>
    </location>
</feature>
<feature type="topological domain" description="Extracellular" evidence="7">
    <location>
        <position position="1012"/>
    </location>
</feature>
<feature type="transmembrane region" description="Helical; Name=21" evidence="2">
    <location>
        <begin position="1013"/>
        <end position="1033"/>
    </location>
</feature>
<feature type="topological domain" description="Cytoplasmic" evidence="7">
    <location>
        <begin position="1034"/>
        <end position="1041"/>
    </location>
</feature>
<feature type="transmembrane region" description="Helical; Name=22" evidence="2">
    <location>
        <begin position="1042"/>
        <end position="1062"/>
    </location>
</feature>
<feature type="topological domain" description="Extracellular" evidence="7">
    <location>
        <begin position="1063"/>
        <end position="1096"/>
    </location>
</feature>
<feature type="transmembrane region" description="Helical; Name=23" evidence="2">
    <location>
        <begin position="1097"/>
        <end position="1117"/>
    </location>
</feature>
<feature type="topological domain" description="Cytoplasmic" evidence="7">
    <location>
        <begin position="1118"/>
        <end position="1160"/>
    </location>
</feature>
<feature type="transmembrane region" description="Helical; Name=24" evidence="2">
    <location>
        <begin position="1161"/>
        <end position="1181"/>
    </location>
</feature>
<feature type="topological domain" description="Extracellular" evidence="7">
    <location>
        <begin position="1182"/>
        <end position="1187"/>
    </location>
</feature>
<feature type="transmembrane region" description="Helical; Name=25" evidence="2">
    <location>
        <begin position="1188"/>
        <end position="1210"/>
    </location>
</feature>
<feature type="topological domain" description="Cytoplasmic" evidence="7">
    <location>
        <begin position="1211"/>
        <end position="1231"/>
    </location>
</feature>
<feature type="transmembrane region" description="Helical; Name=26" evidence="2">
    <location>
        <begin position="1232"/>
        <end position="1252"/>
    </location>
</feature>
<feature type="topological domain" description="Extracellular" evidence="7">
    <location>
        <begin position="1253"/>
        <end position="1299"/>
    </location>
</feature>
<feature type="transmembrane region" description="Helical; Name=27" evidence="2">
    <location>
        <begin position="1300"/>
        <end position="1320"/>
    </location>
</feature>
<feature type="topological domain" description="Cytoplasmic" evidence="7">
    <location>
        <begin position="1321"/>
        <end position="1615"/>
    </location>
</feature>
<feature type="transmembrane region" description="Helical; Name=28" evidence="2">
    <location>
        <begin position="1616"/>
        <end position="1636"/>
    </location>
</feature>
<feature type="topological domain" description="Extracellular" evidence="7">
    <location>
        <begin position="1637"/>
        <end position="1654"/>
    </location>
</feature>
<feature type="transmembrane region" description="Helical; Name=29" evidence="2">
    <location>
        <begin position="1655"/>
        <end position="1675"/>
    </location>
</feature>
<feature type="topological domain" description="Cytoplasmic" evidence="7">
    <location>
        <begin position="1676"/>
        <end position="1706"/>
    </location>
</feature>
<feature type="transmembrane region" description="Helical; Name=30" evidence="2">
    <location>
        <begin position="1707"/>
        <end position="1727"/>
    </location>
</feature>
<feature type="topological domain" description="Extracellular" evidence="7">
    <location>
        <begin position="1728"/>
        <end position="1833"/>
    </location>
</feature>
<feature type="transmembrane region" description="Helical; Name=31" evidence="2">
    <location>
        <begin position="1834"/>
        <end position="1854"/>
    </location>
</feature>
<feature type="topological domain" description="Cytoplasmic" evidence="7">
    <location>
        <begin position="1855"/>
        <end position="1866"/>
    </location>
</feature>
<feature type="transmembrane region" description="Helical; Name=32" evidence="2">
    <location>
        <begin position="1867"/>
        <end position="1887"/>
    </location>
</feature>
<feature type="topological domain" description="Extracellular" evidence="7">
    <location>
        <begin position="1888"/>
        <end position="1900"/>
    </location>
</feature>
<feature type="transmembrane region" description="Helical; Name=33" evidence="2">
    <location>
        <begin position="1901"/>
        <end position="1921"/>
    </location>
</feature>
<feature type="topological domain" description="Cytoplasmic" evidence="7">
    <location>
        <begin position="1922"/>
        <end position="1930"/>
    </location>
</feature>
<feature type="transmembrane region" description="Helical; Name=34" evidence="2">
    <location>
        <begin position="1931"/>
        <end position="1951"/>
    </location>
</feature>
<feature type="topological domain" description="Extracellular" evidence="7">
    <location>
        <begin position="1952"/>
        <end position="2046"/>
    </location>
</feature>
<feature type="transmembrane region" description="Helical; Name=35" evidence="2">
    <location>
        <begin position="2047"/>
        <end position="2067"/>
    </location>
</feature>
<feature type="topological domain" description="Cytoplasmic" evidence="7">
    <location>
        <begin position="2068"/>
        <end position="2346"/>
    </location>
</feature>
<feature type="transmembrane region" description="Helical; Name=36" evidence="2">
    <location>
        <begin position="2347"/>
        <end position="2367"/>
    </location>
</feature>
<feature type="topological domain" description="Extracellular" evidence="7">
    <location>
        <begin position="2368"/>
        <end position="2442"/>
    </location>
</feature>
<feature type="region of interest" description="Disordered" evidence="4">
    <location>
        <begin position="389"/>
        <end position="417"/>
    </location>
</feature>
<feature type="region of interest" description="Disordered" evidence="4">
    <location>
        <begin position="768"/>
        <end position="798"/>
    </location>
</feature>
<feature type="region of interest" description="Disordered" evidence="4">
    <location>
        <begin position="1463"/>
        <end position="1502"/>
    </location>
</feature>
<feature type="compositionally biased region" description="Low complexity" evidence="4">
    <location>
        <begin position="782"/>
        <end position="794"/>
    </location>
</feature>
<feature type="compositionally biased region" description="Acidic residues" evidence="4">
    <location>
        <begin position="1488"/>
        <end position="1498"/>
    </location>
</feature>
<feature type="glycosylation site" description="N-linked (GlcNAc...) asparagine" evidence="3">
    <location>
        <position position="332"/>
    </location>
</feature>
<feature type="glycosylation site" description="N-linked (GlcNAc...) asparagine" evidence="3">
    <location>
        <position position="392"/>
    </location>
</feature>
<feature type="glycosylation site" description="N-linked (GlcNAc...) asparagine" evidence="3">
    <location>
        <position position="440"/>
    </location>
</feature>
<feature type="glycosylation site" description="N-linked (GlcNAc...) asparagine" evidence="3">
    <location>
        <position position="816"/>
    </location>
</feature>
<feature type="glycosylation site" description="N-linked (GlcNAc...) asparagine" evidence="3">
    <location>
        <position position="908"/>
    </location>
</feature>
<feature type="glycosylation site" description="N-linked (GlcNAc...) asparagine" evidence="3">
    <location>
        <position position="913"/>
    </location>
</feature>
<feature type="glycosylation site" description="N-linked (GlcNAc...) asparagine" evidence="3">
    <location>
        <position position="1088"/>
    </location>
</feature>
<feature type="glycosylation site" description="N-linked (GlcNAc...) asparagine" evidence="3">
    <location>
        <position position="1094"/>
    </location>
</feature>
<feature type="glycosylation site" description="N-linked (GlcNAc...) asparagine" evidence="3">
    <location>
        <position position="1646"/>
    </location>
</feature>
<feature type="glycosylation site" description="N-linked (GlcNAc...) asparagine" evidence="3">
    <location>
        <position position="1737"/>
    </location>
</feature>
<feature type="splice variant" id="VSP_060807" description="In isoform l." evidence="7">
    <location>
        <begin position="1"/>
        <end position="1404"/>
    </location>
</feature>
<feature type="splice variant" id="VSP_060808" description="In isoform i and isoform j." evidence="7">
    <original>MTVPPLLKSCVVKLLLPAALLAAAIIRPSFLSIGYVLLALVSAVLPPIRKSLALPKLVGTFVIITFLFCLAVALGVGSYQISEQVVHKNDRTYICNRSDTTLFRSIGLVRFHPTGTFESTRAFLPEIIATSAALLTIIIVMFLSHRDEQLDVVGDVVTVRSESGREQRRQRKLAAIMWSAIGNSLRRLTNFVLFLFTAYVGIVKPSLSNSIYFLAFLFISTWWSTYTPLRHGVYNQIKKFLIFYSALHFLVLYTYQIPIVHHSWLPTGSFLPRLFGLTVLMDSSCPEWWKFPFVAPDFNDDDLIMKWPLYANPIVVLVFFYLTVAQYKFTRNGSREYIDDNEYGSSVHEERFVSAGTVETNVDDVGQLISISESTASAPSGRGRGNTLLLSNASSSANDDEQGRARSRSPLRNGEEQGSIPLRKVTSQVVDRNKLSNIFNTTAPGDKESAASKGMIAVMTFVIFHSYSIALTAMMTWALLYHSIFGLILLILTCILWIFRDTRKSSFAMAPIILMYIEFLLILQYFLSMDIHAEIGDPAWMNFVGIEWTTLPVHAVIILCVQTLLTLPVFLLLRLARREKFYESLSDYERQRRINSYGTFGASKTGAGGVAVAKFQDPKSRKFAAFVEYLSNKVSVYFIFVVSVVLLVVSTCFAPNFYNILFFALWALNLIYLKFSFRLYRGLAYAFWLTLTFYTSIVIIALYIYQFPGVSQWIIRNTSLSQEWLNAIGLVDFRAIGESGALFLQLLAPIALFVVTMLQLKFFHGPWSRATSPRRAENDPPTSTTEAAAVASTSGTQGRAHAAG</original>
    <variation>MLTKSIVSSSGDSGIYEDGCGIMPYIDDDDDLTPIIMARPAIGSGYTGGRNGWHRSPRQYLTNWWS</variation>
    <location>
        <begin position="1"/>
        <end position="804"/>
    </location>
</feature>
<feature type="splice variant" id="VSP_060809" description="In isoform k." evidence="7">
    <location>
        <begin position="1"/>
        <end position="756"/>
    </location>
</feature>
<feature type="splice variant" id="VSP_060810" description="In isoform b, isoform d, isoform f and isoform h." evidence="7">
    <location>
        <begin position="351"/>
        <end position="388"/>
    </location>
</feature>
<feature type="splice variant" id="VSP_060811" description="In isoform a, isoform b, isoform e and isoform f." evidence="7">
    <location>
        <begin position="442"/>
        <end position="443"/>
    </location>
</feature>
<feature type="splice variant" id="VSP_060812" description="In isoform a, isoform b, isoform c and isoform d." evidence="7">
    <location>
        <begin position="615"/>
        <end position="616"/>
    </location>
</feature>
<feature type="splice variant" id="VSP_060813" description="In isoform j." evidence="7">
    <original>H</original>
    <variation>HECMRIDEDDPFPYYDLRISSQDTENE</variation>
    <location>
        <position position="1396"/>
    </location>
</feature>
<feature type="mutagenesis site" description="Does not cause significant conformational changes the last cytoplasmic domain." evidence="5">
    <original>M</original>
    <variation>R</variation>
    <location>
        <position position="2094"/>
    </location>
</feature>
<feature type="mutagenesis site" description="Reduces brood size and ovulation rates, and there is an accumulation of ooplasmic uterine masses." evidence="6">
    <original>R</original>
    <variation>P</variation>
    <location>
        <position position="2405"/>
    </location>
</feature>
<feature type="strand" evidence="23">
    <location>
        <begin position="2079"/>
        <end position="2085"/>
    </location>
</feature>
<feature type="strand" evidence="23">
    <location>
        <begin position="2091"/>
        <end position="2096"/>
    </location>
</feature>
<feature type="strand" evidence="23">
    <location>
        <begin position="2106"/>
        <end position="2109"/>
    </location>
</feature>
<feature type="helix" evidence="23">
    <location>
        <begin position="2113"/>
        <end position="2121"/>
    </location>
</feature>
<feature type="helix" evidence="24">
    <location>
        <begin position="2130"/>
        <end position="2143"/>
    </location>
</feature>
<feature type="helix" evidence="23">
    <location>
        <begin position="2148"/>
        <end position="2150"/>
    </location>
</feature>
<feature type="strand" evidence="23">
    <location>
        <begin position="2151"/>
        <end position="2156"/>
    </location>
</feature>
<feature type="helix" evidence="23">
    <location>
        <begin position="2168"/>
        <end position="2179"/>
    </location>
</feature>
<feature type="strand" evidence="23">
    <location>
        <begin position="2184"/>
        <end position="2191"/>
    </location>
</feature>
<feature type="strand" evidence="23">
    <location>
        <begin position="2206"/>
        <end position="2213"/>
    </location>
</feature>
<feature type="helix" evidence="23">
    <location>
        <begin position="2218"/>
        <end position="2229"/>
    </location>
</feature>
<feature type="strand" evidence="23">
    <location>
        <begin position="2236"/>
        <end position="2242"/>
    </location>
</feature>
<feature type="strand" evidence="23">
    <location>
        <begin position="2244"/>
        <end position="2248"/>
    </location>
</feature>
<feature type="strand" evidence="23">
    <location>
        <begin position="2250"/>
        <end position="2253"/>
    </location>
</feature>
<feature type="helix" evidence="23">
    <location>
        <begin position="2258"/>
        <end position="2264"/>
    </location>
</feature>
<feature type="strand" evidence="23">
    <location>
        <begin position="2288"/>
        <end position="2294"/>
    </location>
</feature>
<feature type="strand" evidence="23">
    <location>
        <begin position="2305"/>
        <end position="2310"/>
    </location>
</feature>
<feature type="turn" evidence="23">
    <location>
        <begin position="2327"/>
        <end position="2329"/>
    </location>
</feature>
<feature type="strand" evidence="23">
    <location>
        <begin position="2334"/>
        <end position="2340"/>
    </location>
</feature>